<gene>
    <name evidence="1" type="primary">atpE</name>
    <name type="ordered locus">HAPS_1621</name>
</gene>
<name>ATPL_GLAP5</name>
<organism>
    <name type="scientific">Glaesserella parasuis serovar 5 (strain SH0165)</name>
    <name type="common">Haemophilus parasuis</name>
    <dbReference type="NCBI Taxonomy" id="557723"/>
    <lineage>
        <taxon>Bacteria</taxon>
        <taxon>Pseudomonadati</taxon>
        <taxon>Pseudomonadota</taxon>
        <taxon>Gammaproteobacteria</taxon>
        <taxon>Pasteurellales</taxon>
        <taxon>Pasteurellaceae</taxon>
        <taxon>Glaesserella</taxon>
    </lineage>
</organism>
<accession>B8F769</accession>
<evidence type="ECO:0000255" key="1">
    <source>
        <dbReference type="HAMAP-Rule" id="MF_01396"/>
    </source>
</evidence>
<sequence>METVITATIIGASILLAFAALGTAIGFAILGGKFLESSARQPELASSLQTKMFIVAGLLDAIAMIAVGISLLFIFANPFIDLLK</sequence>
<proteinExistence type="inferred from homology"/>
<dbReference type="EMBL" id="CP001321">
    <property type="protein sequence ID" value="ACL33171.1"/>
    <property type="molecule type" value="Genomic_DNA"/>
</dbReference>
<dbReference type="RefSeq" id="WP_005713637.1">
    <property type="nucleotide sequence ID" value="NC_011852.1"/>
</dbReference>
<dbReference type="SMR" id="B8F769"/>
<dbReference type="STRING" id="557723.HAPS_1621"/>
<dbReference type="GeneID" id="66619871"/>
<dbReference type="KEGG" id="hap:HAPS_1621"/>
<dbReference type="HOGENOM" id="CLU_148047_1_0_6"/>
<dbReference type="Proteomes" id="UP000006743">
    <property type="component" value="Chromosome"/>
</dbReference>
<dbReference type="GO" id="GO:0005886">
    <property type="term" value="C:plasma membrane"/>
    <property type="evidence" value="ECO:0007669"/>
    <property type="project" value="UniProtKB-SubCell"/>
</dbReference>
<dbReference type="GO" id="GO:0045259">
    <property type="term" value="C:proton-transporting ATP synthase complex"/>
    <property type="evidence" value="ECO:0007669"/>
    <property type="project" value="UniProtKB-KW"/>
</dbReference>
<dbReference type="GO" id="GO:0033177">
    <property type="term" value="C:proton-transporting two-sector ATPase complex, proton-transporting domain"/>
    <property type="evidence" value="ECO:0007669"/>
    <property type="project" value="InterPro"/>
</dbReference>
<dbReference type="GO" id="GO:0008289">
    <property type="term" value="F:lipid binding"/>
    <property type="evidence" value="ECO:0007669"/>
    <property type="project" value="UniProtKB-KW"/>
</dbReference>
<dbReference type="GO" id="GO:0046933">
    <property type="term" value="F:proton-transporting ATP synthase activity, rotational mechanism"/>
    <property type="evidence" value="ECO:0007669"/>
    <property type="project" value="UniProtKB-UniRule"/>
</dbReference>
<dbReference type="CDD" id="cd18185">
    <property type="entry name" value="ATP-synt_Fo_c_ATPE"/>
    <property type="match status" value="1"/>
</dbReference>
<dbReference type="FunFam" id="1.20.20.10:FF:000002">
    <property type="entry name" value="ATP synthase subunit c"/>
    <property type="match status" value="1"/>
</dbReference>
<dbReference type="Gene3D" id="1.20.20.10">
    <property type="entry name" value="F1F0 ATP synthase subunit C"/>
    <property type="match status" value="1"/>
</dbReference>
<dbReference type="HAMAP" id="MF_01396">
    <property type="entry name" value="ATP_synth_c_bact"/>
    <property type="match status" value="1"/>
</dbReference>
<dbReference type="InterPro" id="IPR005953">
    <property type="entry name" value="ATP_synth_csu_bac/chlpt"/>
</dbReference>
<dbReference type="InterPro" id="IPR000454">
    <property type="entry name" value="ATP_synth_F0_csu"/>
</dbReference>
<dbReference type="InterPro" id="IPR020537">
    <property type="entry name" value="ATP_synth_F0_csu_DDCD_BS"/>
</dbReference>
<dbReference type="InterPro" id="IPR038662">
    <property type="entry name" value="ATP_synth_F0_csu_sf"/>
</dbReference>
<dbReference type="InterPro" id="IPR002379">
    <property type="entry name" value="ATPase_proteolipid_c-like_dom"/>
</dbReference>
<dbReference type="InterPro" id="IPR035921">
    <property type="entry name" value="F/V-ATP_Csub_sf"/>
</dbReference>
<dbReference type="NCBIfam" id="TIGR01260">
    <property type="entry name" value="ATP_synt_c"/>
    <property type="match status" value="1"/>
</dbReference>
<dbReference type="NCBIfam" id="NF005363">
    <property type="entry name" value="PRK06876.1"/>
    <property type="match status" value="1"/>
</dbReference>
<dbReference type="Pfam" id="PF00137">
    <property type="entry name" value="ATP-synt_C"/>
    <property type="match status" value="1"/>
</dbReference>
<dbReference type="PRINTS" id="PR00124">
    <property type="entry name" value="ATPASEC"/>
</dbReference>
<dbReference type="SUPFAM" id="SSF81333">
    <property type="entry name" value="F1F0 ATP synthase subunit C"/>
    <property type="match status" value="1"/>
</dbReference>
<dbReference type="PROSITE" id="PS00605">
    <property type="entry name" value="ATPASE_C"/>
    <property type="match status" value="1"/>
</dbReference>
<keyword id="KW-0066">ATP synthesis</keyword>
<keyword id="KW-0997">Cell inner membrane</keyword>
<keyword id="KW-1003">Cell membrane</keyword>
<keyword id="KW-0138">CF(0)</keyword>
<keyword id="KW-0375">Hydrogen ion transport</keyword>
<keyword id="KW-0406">Ion transport</keyword>
<keyword id="KW-0446">Lipid-binding</keyword>
<keyword id="KW-0472">Membrane</keyword>
<keyword id="KW-1185">Reference proteome</keyword>
<keyword id="KW-0812">Transmembrane</keyword>
<keyword id="KW-1133">Transmembrane helix</keyword>
<keyword id="KW-0813">Transport</keyword>
<feature type="chain" id="PRO_1000184388" description="ATP synthase subunit c">
    <location>
        <begin position="1"/>
        <end position="84"/>
    </location>
</feature>
<feature type="transmembrane region" description="Helical" evidence="1">
    <location>
        <begin position="9"/>
        <end position="29"/>
    </location>
</feature>
<feature type="transmembrane region" description="Helical" evidence="1">
    <location>
        <begin position="54"/>
        <end position="74"/>
    </location>
</feature>
<feature type="site" description="Reversibly protonated during proton transport" evidence="1">
    <location>
        <position position="60"/>
    </location>
</feature>
<protein>
    <recommendedName>
        <fullName evidence="1">ATP synthase subunit c</fullName>
    </recommendedName>
    <alternativeName>
        <fullName evidence="1">ATP synthase F(0) sector subunit c</fullName>
    </alternativeName>
    <alternativeName>
        <fullName evidence="1">F-type ATPase subunit c</fullName>
        <shortName evidence="1">F-ATPase subunit c</shortName>
    </alternativeName>
    <alternativeName>
        <fullName evidence="1">Lipid-binding protein</fullName>
    </alternativeName>
</protein>
<comment type="function">
    <text evidence="1">F(1)F(0) ATP synthase produces ATP from ADP in the presence of a proton or sodium gradient. F-type ATPases consist of two structural domains, F(1) containing the extramembraneous catalytic core and F(0) containing the membrane proton channel, linked together by a central stalk and a peripheral stalk. During catalysis, ATP synthesis in the catalytic domain of F(1) is coupled via a rotary mechanism of the central stalk subunits to proton translocation.</text>
</comment>
<comment type="function">
    <text evidence="1">Key component of the F(0) channel; it plays a direct role in translocation across the membrane. A homomeric c-ring of between 10-14 subunits forms the central stalk rotor element with the F(1) delta and epsilon subunits.</text>
</comment>
<comment type="subunit">
    <text evidence="1">F-type ATPases have 2 components, F(1) - the catalytic core - and F(0) - the membrane proton channel. F(1) has five subunits: alpha(3), beta(3), gamma(1), delta(1), epsilon(1). F(0) has three main subunits: a(1), b(2) and c(10-14). The alpha and beta chains form an alternating ring which encloses part of the gamma chain. F(1) is attached to F(0) by a central stalk formed by the gamma and epsilon chains, while a peripheral stalk is formed by the delta and b chains.</text>
</comment>
<comment type="subcellular location">
    <subcellularLocation>
        <location evidence="1">Cell inner membrane</location>
        <topology evidence="1">Multi-pass membrane protein</topology>
    </subcellularLocation>
</comment>
<comment type="similarity">
    <text evidence="1">Belongs to the ATPase C chain family.</text>
</comment>
<reference key="1">
    <citation type="journal article" date="2009" name="J. Bacteriol.">
        <title>Complete genome sequence of Haemophilus parasuis SH0165.</title>
        <authorList>
            <person name="Yue M."/>
            <person name="Yang F."/>
            <person name="Yang J."/>
            <person name="Bei W."/>
            <person name="Cai X."/>
            <person name="Chen L."/>
            <person name="Dong J."/>
            <person name="Zhou R."/>
            <person name="Jin M."/>
            <person name="Jin Q."/>
            <person name="Chen H."/>
        </authorList>
    </citation>
    <scope>NUCLEOTIDE SEQUENCE [LARGE SCALE GENOMIC DNA]</scope>
    <source>
        <strain>SH0165</strain>
    </source>
</reference>